<sequence>MSFASETKKELTNLEMKECCEKAELSALLRMNGSLSFSNRRLSIDIQTENAAIARRIYTLLKKGYDVTVELLVRKKMRLKKNNVYIVRLVEKSREILADLHIVRDDFSFIRNISQELIEKKCCKRSYLRGAFLAGGSVNNPETSSYHLEIFSLYKEHNDAICELMNGFDLNSKTLERRKGYITYLKEAEKITEFLNIIGAHNALLRFEDIRIVRDMRNSVNRLVNCETANLNKTIGAALRQIENIRYIDETVGLDILPDKLREIAQLRRDYQDVTLKELGEMVSGGKISKSGINHRLRKIDDIAEKLRAGETVAKK</sequence>
<feature type="chain" id="PRO_1000184852" description="Probable cell division protein WhiA">
    <location>
        <begin position="1"/>
        <end position="316"/>
    </location>
</feature>
<feature type="DNA-binding region" description="H-T-H motif" evidence="1">
    <location>
        <begin position="275"/>
        <end position="309"/>
    </location>
</feature>
<protein>
    <recommendedName>
        <fullName evidence="1">Probable cell division protein WhiA</fullName>
    </recommendedName>
</protein>
<organism>
    <name type="scientific">Bacillus anthracis (strain CDC 684 / NRRL 3495)</name>
    <dbReference type="NCBI Taxonomy" id="568206"/>
    <lineage>
        <taxon>Bacteria</taxon>
        <taxon>Bacillati</taxon>
        <taxon>Bacillota</taxon>
        <taxon>Bacilli</taxon>
        <taxon>Bacillales</taxon>
        <taxon>Bacillaceae</taxon>
        <taxon>Bacillus</taxon>
        <taxon>Bacillus cereus group</taxon>
    </lineage>
</organism>
<keyword id="KW-0131">Cell cycle</keyword>
<keyword id="KW-0132">Cell division</keyword>
<keyword id="KW-0238">DNA-binding</keyword>
<dbReference type="EMBL" id="CP001215">
    <property type="protein sequence ID" value="ACP12394.1"/>
    <property type="molecule type" value="Genomic_DNA"/>
</dbReference>
<dbReference type="RefSeq" id="WP_000006561.1">
    <property type="nucleotide sequence ID" value="NC_012581.1"/>
</dbReference>
<dbReference type="SMR" id="C3LEC2"/>
<dbReference type="GeneID" id="75088327"/>
<dbReference type="KEGG" id="bah:BAMEG_5435"/>
<dbReference type="HOGENOM" id="CLU_053282_0_0_9"/>
<dbReference type="GO" id="GO:0003677">
    <property type="term" value="F:DNA binding"/>
    <property type="evidence" value="ECO:0007669"/>
    <property type="project" value="UniProtKB-UniRule"/>
</dbReference>
<dbReference type="GO" id="GO:0051301">
    <property type="term" value="P:cell division"/>
    <property type="evidence" value="ECO:0007669"/>
    <property type="project" value="UniProtKB-UniRule"/>
</dbReference>
<dbReference type="GO" id="GO:0043937">
    <property type="term" value="P:regulation of sporulation"/>
    <property type="evidence" value="ECO:0007669"/>
    <property type="project" value="InterPro"/>
</dbReference>
<dbReference type="FunFam" id="3.10.28.10:FF:000002">
    <property type="entry name" value="Probable cell division protein WhiA"/>
    <property type="match status" value="1"/>
</dbReference>
<dbReference type="Gene3D" id="3.10.28.10">
    <property type="entry name" value="Homing endonucleases"/>
    <property type="match status" value="1"/>
</dbReference>
<dbReference type="HAMAP" id="MF_01420">
    <property type="entry name" value="HTH_type_WhiA"/>
    <property type="match status" value="1"/>
</dbReference>
<dbReference type="InterPro" id="IPR027434">
    <property type="entry name" value="Homing_endonucl"/>
</dbReference>
<dbReference type="InterPro" id="IPR018478">
    <property type="entry name" value="Sporu_reg_WhiA_N_dom"/>
</dbReference>
<dbReference type="InterPro" id="IPR003802">
    <property type="entry name" value="Sporulation_regulator_WhiA"/>
</dbReference>
<dbReference type="InterPro" id="IPR023054">
    <property type="entry name" value="Sporulation_regulator_WhiA_C"/>
</dbReference>
<dbReference type="InterPro" id="IPR039518">
    <property type="entry name" value="WhiA_LAGLIDADG_dom"/>
</dbReference>
<dbReference type="NCBIfam" id="TIGR00647">
    <property type="entry name" value="DNA_bind_WhiA"/>
    <property type="match status" value="1"/>
</dbReference>
<dbReference type="PANTHER" id="PTHR37307">
    <property type="entry name" value="CELL DIVISION PROTEIN WHIA-RELATED"/>
    <property type="match status" value="1"/>
</dbReference>
<dbReference type="PANTHER" id="PTHR37307:SF1">
    <property type="entry name" value="CELL DIVISION PROTEIN WHIA-RELATED"/>
    <property type="match status" value="1"/>
</dbReference>
<dbReference type="Pfam" id="PF02650">
    <property type="entry name" value="HTH_WhiA"/>
    <property type="match status" value="1"/>
</dbReference>
<dbReference type="Pfam" id="PF14527">
    <property type="entry name" value="LAGLIDADG_WhiA"/>
    <property type="match status" value="1"/>
</dbReference>
<dbReference type="Pfam" id="PF10298">
    <property type="entry name" value="WhiA_N"/>
    <property type="match status" value="1"/>
</dbReference>
<dbReference type="SUPFAM" id="SSF55608">
    <property type="entry name" value="Homing endonucleases"/>
    <property type="match status" value="1"/>
</dbReference>
<gene>
    <name evidence="1" type="primary">whiA</name>
    <name type="ordered locus">BAMEG_5435</name>
</gene>
<proteinExistence type="inferred from homology"/>
<accession>C3LEC2</accession>
<reference key="1">
    <citation type="submission" date="2008-10" db="EMBL/GenBank/DDBJ databases">
        <title>Genome sequence of Bacillus anthracis str. CDC 684.</title>
        <authorList>
            <person name="Dodson R.J."/>
            <person name="Munk A.C."/>
            <person name="Brettin T."/>
            <person name="Bruce D."/>
            <person name="Detter C."/>
            <person name="Tapia R."/>
            <person name="Han C."/>
            <person name="Sutton G."/>
            <person name="Sims D."/>
        </authorList>
    </citation>
    <scope>NUCLEOTIDE SEQUENCE [LARGE SCALE GENOMIC DNA]</scope>
    <source>
        <strain>CDC 684 / NRRL 3495</strain>
    </source>
</reference>
<name>WHIA_BACAC</name>
<comment type="function">
    <text evidence="1">Involved in cell division and chromosome segregation.</text>
</comment>
<comment type="similarity">
    <text evidence="1">Belongs to the WhiA family.</text>
</comment>
<evidence type="ECO:0000255" key="1">
    <source>
        <dbReference type="HAMAP-Rule" id="MF_01420"/>
    </source>
</evidence>